<gene>
    <name type="ordered locus">s064R</name>
</gene>
<dbReference type="EMBL" id="AF170722">
    <property type="protein sequence ID" value="AAF17946.1"/>
    <property type="molecule type" value="Genomic_DNA"/>
</dbReference>
<dbReference type="RefSeq" id="NP_051953.1">
    <property type="nucleotide sequence ID" value="NC_001266.1"/>
</dbReference>
<dbReference type="SMR" id="Q9Q907"/>
<dbReference type="KEGG" id="vg:1486907"/>
<dbReference type="Proteomes" id="UP000000868">
    <property type="component" value="Segment"/>
</dbReference>
<dbReference type="GO" id="GO:0016032">
    <property type="term" value="P:viral process"/>
    <property type="evidence" value="ECO:0007669"/>
    <property type="project" value="InterPro"/>
</dbReference>
<dbReference type="InterPro" id="IPR004967">
    <property type="entry name" value="Poxvirus_C7/F8A"/>
</dbReference>
<dbReference type="Pfam" id="PF03287">
    <property type="entry name" value="Pox_C7_F8A"/>
    <property type="match status" value="1"/>
</dbReference>
<organism>
    <name type="scientific">Rabbit fibroma virus (strain Kasza)</name>
    <name type="common">RFV</name>
    <name type="synonym">Shope fibroma virus (strain Kasza)</name>
    <dbReference type="NCBI Taxonomy" id="10272"/>
    <lineage>
        <taxon>Viruses</taxon>
        <taxon>Varidnaviria</taxon>
        <taxon>Bamfordvirae</taxon>
        <taxon>Nucleocytoviricota</taxon>
        <taxon>Pokkesviricetes</taxon>
        <taxon>Chitovirales</taxon>
        <taxon>Poxviridae</taxon>
        <taxon>Chordopoxvirinae</taxon>
        <taxon>Leporipoxvirus</taxon>
        <taxon>Rabbit fibroma virus</taxon>
    </lineage>
</organism>
<comment type="function">
    <text evidence="1">Plays a role for multiplication of the virus in different cell types.</text>
</comment>
<comment type="similarity">
    <text evidence="3">Belongs to the poxviridae C7 protein family.</text>
</comment>
<keyword id="KW-1185">Reference proteome</keyword>
<proteinExistence type="inferred from homology"/>
<feature type="chain" id="PRO_0000099402" description="Probable host range protein 2-3">
    <location>
        <begin position="1"/>
        <end position="198"/>
    </location>
</feature>
<feature type="region of interest" description="Disordered" evidence="2">
    <location>
        <begin position="153"/>
        <end position="198"/>
    </location>
</feature>
<feature type="compositionally biased region" description="Acidic residues" evidence="2">
    <location>
        <begin position="156"/>
        <end position="171"/>
    </location>
</feature>
<feature type="compositionally biased region" description="Acidic residues" evidence="2">
    <location>
        <begin position="178"/>
        <end position="198"/>
    </location>
</feature>
<organismHost>
    <name type="scientific">Oryctolagus cuniculus</name>
    <name type="common">Rabbit</name>
    <dbReference type="NCBI Taxonomy" id="9986"/>
</organismHost>
<accession>Q9Q907</accession>
<reference key="1">
    <citation type="journal article" date="1999" name="Virology">
        <title>The complete genome sequence of shope (Rabbit) fibroma virus.</title>
        <authorList>
            <person name="Willer D.O."/>
            <person name="McFadden G."/>
            <person name="Evans D.H."/>
        </authorList>
    </citation>
    <scope>NUCLEOTIDE SEQUENCE [LARGE SCALE GENOMIC DNA]</scope>
</reference>
<name>VH23_RFVKA</name>
<sequence length="198" mass="23283">MGITHEFHIFLVDENVSLKSVSLLKGDSYGCNIHLKNSECKYITFILVLEPDWSEIAEAKPIRIRLNGKKMRTQLLTKTLMSIIYKAVIYVEENALVQFYSDTDRLYTDMYPTFLIDMDKQHYHILDNGYTYTYIDSFISECDKQRYLTSDIGENGYEDSTEEEDNEEDTDGVCLYCLEEEEEEDEDEDEDEDEDEEE</sequence>
<evidence type="ECO:0000250" key="1"/>
<evidence type="ECO:0000256" key="2">
    <source>
        <dbReference type="SAM" id="MobiDB-lite"/>
    </source>
</evidence>
<evidence type="ECO:0000305" key="3"/>
<protein>
    <recommendedName>
        <fullName>Probable host range protein 2-3</fullName>
    </recommendedName>
</protein>